<evidence type="ECO:0000255" key="1">
    <source>
        <dbReference type="HAMAP-Rule" id="MF_01307"/>
    </source>
</evidence>
<evidence type="ECO:0000305" key="2"/>
<feature type="chain" id="PRO_0000323205" description="Small ribosomal subunit protein uS5">
    <location>
        <begin position="1"/>
        <end position="164"/>
    </location>
</feature>
<feature type="domain" description="S5 DRBM" evidence="1">
    <location>
        <begin position="10"/>
        <end position="73"/>
    </location>
</feature>
<dbReference type="EMBL" id="CP000725">
    <property type="protein sequence ID" value="ABV10660.1"/>
    <property type="molecule type" value="Genomic_DNA"/>
</dbReference>
<dbReference type="RefSeq" id="WP_006269137.1">
    <property type="nucleotide sequence ID" value="NC_009785.1"/>
</dbReference>
<dbReference type="SMR" id="A8AZK8"/>
<dbReference type="STRING" id="467705.SGO_1968"/>
<dbReference type="GeneID" id="93847823"/>
<dbReference type="KEGG" id="sgo:SGO_1968"/>
<dbReference type="eggNOG" id="COG0098">
    <property type="taxonomic scope" value="Bacteria"/>
</dbReference>
<dbReference type="HOGENOM" id="CLU_065898_2_2_9"/>
<dbReference type="Proteomes" id="UP000001131">
    <property type="component" value="Chromosome"/>
</dbReference>
<dbReference type="GO" id="GO:0015935">
    <property type="term" value="C:small ribosomal subunit"/>
    <property type="evidence" value="ECO:0007669"/>
    <property type="project" value="InterPro"/>
</dbReference>
<dbReference type="GO" id="GO:0019843">
    <property type="term" value="F:rRNA binding"/>
    <property type="evidence" value="ECO:0007669"/>
    <property type="project" value="UniProtKB-UniRule"/>
</dbReference>
<dbReference type="GO" id="GO:0003735">
    <property type="term" value="F:structural constituent of ribosome"/>
    <property type="evidence" value="ECO:0007669"/>
    <property type="project" value="InterPro"/>
</dbReference>
<dbReference type="GO" id="GO:0006412">
    <property type="term" value="P:translation"/>
    <property type="evidence" value="ECO:0007669"/>
    <property type="project" value="UniProtKB-UniRule"/>
</dbReference>
<dbReference type="FunFam" id="3.30.160.20:FF:000001">
    <property type="entry name" value="30S ribosomal protein S5"/>
    <property type="match status" value="1"/>
</dbReference>
<dbReference type="FunFam" id="3.30.230.10:FF:000002">
    <property type="entry name" value="30S ribosomal protein S5"/>
    <property type="match status" value="1"/>
</dbReference>
<dbReference type="Gene3D" id="3.30.160.20">
    <property type="match status" value="1"/>
</dbReference>
<dbReference type="Gene3D" id="3.30.230.10">
    <property type="match status" value="1"/>
</dbReference>
<dbReference type="HAMAP" id="MF_01307_B">
    <property type="entry name" value="Ribosomal_uS5_B"/>
    <property type="match status" value="1"/>
</dbReference>
<dbReference type="InterPro" id="IPR020568">
    <property type="entry name" value="Ribosomal_Su5_D2-typ_SF"/>
</dbReference>
<dbReference type="InterPro" id="IPR000851">
    <property type="entry name" value="Ribosomal_uS5"/>
</dbReference>
<dbReference type="InterPro" id="IPR005712">
    <property type="entry name" value="Ribosomal_uS5_bac-type"/>
</dbReference>
<dbReference type="InterPro" id="IPR005324">
    <property type="entry name" value="Ribosomal_uS5_C"/>
</dbReference>
<dbReference type="InterPro" id="IPR013810">
    <property type="entry name" value="Ribosomal_uS5_N"/>
</dbReference>
<dbReference type="InterPro" id="IPR018192">
    <property type="entry name" value="Ribosomal_uS5_N_CS"/>
</dbReference>
<dbReference type="InterPro" id="IPR014721">
    <property type="entry name" value="Ribsml_uS5_D2-typ_fold_subgr"/>
</dbReference>
<dbReference type="NCBIfam" id="TIGR01021">
    <property type="entry name" value="rpsE_bact"/>
    <property type="match status" value="1"/>
</dbReference>
<dbReference type="PANTHER" id="PTHR48277">
    <property type="entry name" value="MITOCHONDRIAL RIBOSOMAL PROTEIN S5"/>
    <property type="match status" value="1"/>
</dbReference>
<dbReference type="PANTHER" id="PTHR48277:SF1">
    <property type="entry name" value="MITOCHONDRIAL RIBOSOMAL PROTEIN S5"/>
    <property type="match status" value="1"/>
</dbReference>
<dbReference type="Pfam" id="PF00333">
    <property type="entry name" value="Ribosomal_S5"/>
    <property type="match status" value="1"/>
</dbReference>
<dbReference type="Pfam" id="PF03719">
    <property type="entry name" value="Ribosomal_S5_C"/>
    <property type="match status" value="1"/>
</dbReference>
<dbReference type="SUPFAM" id="SSF54768">
    <property type="entry name" value="dsRNA-binding domain-like"/>
    <property type="match status" value="1"/>
</dbReference>
<dbReference type="SUPFAM" id="SSF54211">
    <property type="entry name" value="Ribosomal protein S5 domain 2-like"/>
    <property type="match status" value="1"/>
</dbReference>
<dbReference type="PROSITE" id="PS00585">
    <property type="entry name" value="RIBOSOMAL_S5"/>
    <property type="match status" value="1"/>
</dbReference>
<dbReference type="PROSITE" id="PS50881">
    <property type="entry name" value="S5_DSRBD"/>
    <property type="match status" value="1"/>
</dbReference>
<comment type="function">
    <text evidence="1">With S4 and S12 plays an important role in translational accuracy.</text>
</comment>
<comment type="function">
    <text evidence="1">Located at the back of the 30S subunit body where it stabilizes the conformation of the head with respect to the body.</text>
</comment>
<comment type="subunit">
    <text evidence="1">Part of the 30S ribosomal subunit. Contacts proteins S4 and S8.</text>
</comment>
<comment type="domain">
    <text>The N-terminal domain interacts with the head of the 30S subunit; the C-terminal domain interacts with the body and contacts protein S4. The interaction surface between S4 and S5 is involved in control of translational fidelity.</text>
</comment>
<comment type="similarity">
    <text evidence="1">Belongs to the universal ribosomal protein uS5 family.</text>
</comment>
<name>RS5_STRGC</name>
<accession>A8AZK8</accession>
<sequence length="164" mass="17090">MAFKDNAVELEERVVAINRVTKVVKGGRRLRFAALVVVGDRNGRVGFGTGKAQEVPEAIRKAVEDAKKNLIEVPMVGTTIPHEVLSEFGGAKVLLKPAVEGSGVAAGGAVRAVIELAGVADVTSKSLGSNTPINIVRATVEGLKQLKRAEEVAALRGISVSDLA</sequence>
<proteinExistence type="inferred from homology"/>
<organism>
    <name type="scientific">Streptococcus gordonii (strain Challis / ATCC 35105 / BCRC 15272 / CH1 / DL1 / V288)</name>
    <dbReference type="NCBI Taxonomy" id="467705"/>
    <lineage>
        <taxon>Bacteria</taxon>
        <taxon>Bacillati</taxon>
        <taxon>Bacillota</taxon>
        <taxon>Bacilli</taxon>
        <taxon>Lactobacillales</taxon>
        <taxon>Streptococcaceae</taxon>
        <taxon>Streptococcus</taxon>
    </lineage>
</organism>
<gene>
    <name evidence="1" type="primary">rpsE</name>
    <name type="ordered locus">SGO_1968</name>
</gene>
<keyword id="KW-1185">Reference proteome</keyword>
<keyword id="KW-0687">Ribonucleoprotein</keyword>
<keyword id="KW-0689">Ribosomal protein</keyword>
<keyword id="KW-0694">RNA-binding</keyword>
<keyword id="KW-0699">rRNA-binding</keyword>
<protein>
    <recommendedName>
        <fullName evidence="1">Small ribosomal subunit protein uS5</fullName>
    </recommendedName>
    <alternativeName>
        <fullName evidence="2">30S ribosomal protein S5</fullName>
    </alternativeName>
</protein>
<reference key="1">
    <citation type="journal article" date="2007" name="J. Bacteriol.">
        <title>Genome-wide transcriptional changes in Streptococcus gordonii in response to competence signaling peptide.</title>
        <authorList>
            <person name="Vickerman M.M."/>
            <person name="Iobst S."/>
            <person name="Jesionowski A.M."/>
            <person name="Gill S.R."/>
        </authorList>
    </citation>
    <scope>NUCLEOTIDE SEQUENCE [LARGE SCALE GENOMIC DNA]</scope>
    <source>
        <strain>Challis / ATCC 35105 / BCRC 15272 / CH1 / DL1 / V288</strain>
    </source>
</reference>